<dbReference type="EMBL" id="BC102843">
    <property type="protein sequence ID" value="AAI02844.1"/>
    <property type="molecule type" value="mRNA"/>
</dbReference>
<dbReference type="RefSeq" id="NP_001030279.1">
    <property type="nucleotide sequence ID" value="NM_001035107.2"/>
</dbReference>
<dbReference type="SMR" id="Q3SZI1"/>
<dbReference type="FunCoup" id="Q3SZI1">
    <property type="interactions" value="25"/>
</dbReference>
<dbReference type="STRING" id="9913.ENSBTAP00000016790"/>
<dbReference type="MEROPS" id="C01.973"/>
<dbReference type="GlyCosmos" id="Q3SZI1">
    <property type="glycosylation" value="5 sites, No reported glycans"/>
</dbReference>
<dbReference type="GlyGen" id="Q3SZI1">
    <property type="glycosylation" value="5 sites"/>
</dbReference>
<dbReference type="PaxDb" id="9913-ENSBTAP00000016790"/>
<dbReference type="Ensembl" id="ENSBTAT00000016790.6">
    <property type="protein sequence ID" value="ENSBTAP00000016790.5"/>
    <property type="gene ID" value="ENSBTAG00000012652.7"/>
</dbReference>
<dbReference type="GeneID" id="512517"/>
<dbReference type="KEGG" id="bta:512517"/>
<dbReference type="CTD" id="27283"/>
<dbReference type="VEuPathDB" id="HostDB:ENSBTAG00000012652"/>
<dbReference type="VGNC" id="VGNC:35874">
    <property type="gene designation" value="TINAG"/>
</dbReference>
<dbReference type="eggNOG" id="KOG1544">
    <property type="taxonomic scope" value="Eukaryota"/>
</dbReference>
<dbReference type="GeneTree" id="ENSGT00940000161065"/>
<dbReference type="HOGENOM" id="CLU_012184_3_2_1"/>
<dbReference type="InParanoid" id="Q3SZI1"/>
<dbReference type="OMA" id="HTNGPCP"/>
<dbReference type="OrthoDB" id="190265at2759"/>
<dbReference type="TreeFam" id="TF313765"/>
<dbReference type="Proteomes" id="UP000009136">
    <property type="component" value="Chromosome 23"/>
</dbReference>
<dbReference type="Bgee" id="ENSBTAG00000012652">
    <property type="expression patterns" value="Expressed in metanephros cortex and 22 other cell types or tissues"/>
</dbReference>
<dbReference type="GO" id="GO:0005604">
    <property type="term" value="C:basement membrane"/>
    <property type="evidence" value="ECO:0007669"/>
    <property type="project" value="UniProtKB-SubCell"/>
</dbReference>
<dbReference type="GO" id="GO:0005615">
    <property type="term" value="C:extracellular space"/>
    <property type="evidence" value="ECO:0000318"/>
    <property type="project" value="GO_Central"/>
</dbReference>
<dbReference type="GO" id="GO:0005764">
    <property type="term" value="C:lysosome"/>
    <property type="evidence" value="ECO:0000318"/>
    <property type="project" value="GO_Central"/>
</dbReference>
<dbReference type="GO" id="GO:0008234">
    <property type="term" value="F:cysteine-type peptidase activity"/>
    <property type="evidence" value="ECO:0007669"/>
    <property type="project" value="InterPro"/>
</dbReference>
<dbReference type="GO" id="GO:0007155">
    <property type="term" value="P:cell adhesion"/>
    <property type="evidence" value="ECO:0007669"/>
    <property type="project" value="UniProtKB-KW"/>
</dbReference>
<dbReference type="GO" id="GO:0006508">
    <property type="term" value="P:proteolysis"/>
    <property type="evidence" value="ECO:0007669"/>
    <property type="project" value="InterPro"/>
</dbReference>
<dbReference type="CDD" id="cd02620">
    <property type="entry name" value="Peptidase_C1A_CathepsinB"/>
    <property type="match status" value="1"/>
</dbReference>
<dbReference type="FunFam" id="3.90.70.10:FF:000037">
    <property type="entry name" value="Tubulointerstitial nephritis antigen-like 1"/>
    <property type="match status" value="1"/>
</dbReference>
<dbReference type="Gene3D" id="3.90.70.10">
    <property type="entry name" value="Cysteine proteinases"/>
    <property type="match status" value="1"/>
</dbReference>
<dbReference type="InterPro" id="IPR038765">
    <property type="entry name" value="Papain-like_cys_pep_sf"/>
</dbReference>
<dbReference type="InterPro" id="IPR025661">
    <property type="entry name" value="Pept_asp_AS"/>
</dbReference>
<dbReference type="InterPro" id="IPR013128">
    <property type="entry name" value="Peptidase_C1A"/>
</dbReference>
<dbReference type="InterPro" id="IPR000668">
    <property type="entry name" value="Peptidase_C1A_C"/>
</dbReference>
<dbReference type="InterPro" id="IPR001212">
    <property type="entry name" value="Somatomedin_B_dom"/>
</dbReference>
<dbReference type="PANTHER" id="PTHR12411">
    <property type="entry name" value="CYSTEINE PROTEASE FAMILY C1-RELATED"/>
    <property type="match status" value="1"/>
</dbReference>
<dbReference type="Pfam" id="PF00112">
    <property type="entry name" value="Peptidase_C1"/>
    <property type="match status" value="1"/>
</dbReference>
<dbReference type="SMART" id="SM00645">
    <property type="entry name" value="Pept_C1"/>
    <property type="match status" value="1"/>
</dbReference>
<dbReference type="SMART" id="SM00201">
    <property type="entry name" value="SO"/>
    <property type="match status" value="1"/>
</dbReference>
<dbReference type="SUPFAM" id="SSF54001">
    <property type="entry name" value="Cysteine proteinases"/>
    <property type="match status" value="1"/>
</dbReference>
<dbReference type="SUPFAM" id="SSF57603">
    <property type="entry name" value="FnI-like domain"/>
    <property type="match status" value="1"/>
</dbReference>
<dbReference type="PROSITE" id="PS00524">
    <property type="entry name" value="SMB_1"/>
    <property type="match status" value="1"/>
</dbReference>
<dbReference type="PROSITE" id="PS50958">
    <property type="entry name" value="SMB_2"/>
    <property type="match status" value="1"/>
</dbReference>
<dbReference type="PROSITE" id="PS00640">
    <property type="entry name" value="THIOL_PROTEASE_ASN"/>
    <property type="match status" value="1"/>
</dbReference>
<protein>
    <recommendedName>
        <fullName>Tubulointerstitial nephritis antigen</fullName>
        <shortName>TIN-Ag</shortName>
    </recommendedName>
</protein>
<name>TINAG_BOVIN</name>
<gene>
    <name type="primary">TINAG</name>
</gene>
<comment type="function">
    <text evidence="1">Mediates adhesion of proximal tubule epithelial cells via integrins alpha3-beta1 and alphaV-beta3. This is a non catalytic peptidase C1 family protein (By similarity).</text>
</comment>
<comment type="subcellular location">
    <subcellularLocation>
        <location evidence="1">Secreted</location>
        <location evidence="1">Extracellular space</location>
        <location evidence="1">Extracellular matrix</location>
        <location evidence="1">Basement membrane</location>
    </subcellularLocation>
</comment>
<comment type="similarity">
    <text evidence="4">Belongs to the peptidase C1 family.</text>
</comment>
<proteinExistence type="evidence at transcript level"/>
<evidence type="ECO:0000250" key="1"/>
<evidence type="ECO:0000255" key="2"/>
<evidence type="ECO:0000255" key="3">
    <source>
        <dbReference type="PROSITE-ProRule" id="PRU00350"/>
    </source>
</evidence>
<evidence type="ECO:0000255" key="4">
    <source>
        <dbReference type="PROSITE-ProRule" id="PRU10090"/>
    </source>
</evidence>
<keyword id="KW-0084">Basement membrane</keyword>
<keyword id="KW-0130">Cell adhesion</keyword>
<keyword id="KW-1015">Disulfide bond</keyword>
<keyword id="KW-0272">Extracellular matrix</keyword>
<keyword id="KW-0325">Glycoprotein</keyword>
<keyword id="KW-1185">Reference proteome</keyword>
<keyword id="KW-0964">Secreted</keyword>
<feature type="chain" id="PRO_0000239654" description="Tubulointerstitial nephritis antigen">
    <location>
        <begin position="1"/>
        <end position="476"/>
    </location>
</feature>
<feature type="domain" description="SMB" evidence="3">
    <location>
        <begin position="59"/>
        <end position="107"/>
    </location>
</feature>
<feature type="site" description="Cleavage; by furin" evidence="2">
    <location>
        <begin position="49"/>
        <end position="50"/>
    </location>
</feature>
<feature type="glycosylation site" description="N-linked (GlcNAc...) asparagine" evidence="2">
    <location>
        <position position="38"/>
    </location>
</feature>
<feature type="glycosylation site" description="N-linked (GlcNAc...) asparagine" evidence="2">
    <location>
        <position position="175"/>
    </location>
</feature>
<feature type="glycosylation site" description="N-linked (GlcNAc...) asparagine" evidence="2">
    <location>
        <position position="314"/>
    </location>
</feature>
<feature type="glycosylation site" description="N-linked (GlcNAc...) asparagine" evidence="2">
    <location>
        <position position="360"/>
    </location>
</feature>
<feature type="glycosylation site" description="N-linked (GlcNAc...) asparagine" evidence="2">
    <location>
        <position position="455"/>
    </location>
</feature>
<feature type="disulfide bond" evidence="3">
    <location>
        <begin position="63"/>
        <end position="83"/>
    </location>
</feature>
<feature type="disulfide bond" evidence="3">
    <location>
        <begin position="87"/>
        <end position="94"/>
    </location>
</feature>
<organism>
    <name type="scientific">Bos taurus</name>
    <name type="common">Bovine</name>
    <dbReference type="NCBI Taxonomy" id="9913"/>
    <lineage>
        <taxon>Eukaryota</taxon>
        <taxon>Metazoa</taxon>
        <taxon>Chordata</taxon>
        <taxon>Craniata</taxon>
        <taxon>Vertebrata</taxon>
        <taxon>Euteleostomi</taxon>
        <taxon>Mammalia</taxon>
        <taxon>Eutheria</taxon>
        <taxon>Laurasiatheria</taxon>
        <taxon>Artiodactyla</taxon>
        <taxon>Ruminantia</taxon>
        <taxon>Pecora</taxon>
        <taxon>Bovidae</taxon>
        <taxon>Bovinae</taxon>
        <taxon>Bos</taxon>
    </lineage>
</organism>
<accession>Q3SZI1</accession>
<sequence length="476" mass="54235">MCAGYKILILAYLTTEIWMERQYLSQREVDPGAEFTRNHTISEGTRFKRAVFEGQYCRRFGCCADRDDGCVTQFYEADALCYCDKFCERENSDCCPDYKSFCREEKGWPPRTKPWSPEGCHRDGQHYEEGSVIKENCNSCTCSGQQWKCSQHVCLVQPGLIEHVNKGDYGWTAQNYSQFWGMTLEEGFKYRLGTLPPSPLLLSMNEVTASLTKTTDLPEFFIASYKWPGWTHGPLDQKNCAASWAFSTASVAADRIAIQSQGRYTANLSPQNLISCCAKKRHGCNSGSVDRAWWYLRKRGLVSHACYPLFKDQNATNNGCAMASRSDGRGKRHATTPCPNSIEKSNRIYQCSPPYRVSSNETEIMREIMQNGPVQAIMQVHEDFFNYKTGIYRHITSTNEDSEKYRKFRTHAVKLTGWGTLRGAQGQKEKFWIAANSWGKSWGENGYFRILRGVNESDIEKLIIAAWGQLTSADEP</sequence>
<reference key="1">
    <citation type="submission" date="2005-08" db="EMBL/GenBank/DDBJ databases">
        <authorList>
            <consortium name="NIH - Mammalian Gene Collection (MGC) project"/>
        </authorList>
    </citation>
    <scope>NUCLEOTIDE SEQUENCE [LARGE SCALE MRNA]</scope>
    <source>
        <strain>Crossbred X Angus</strain>
        <tissue>Ileum</tissue>
    </source>
</reference>